<gene>
    <name type="primary">Fbxo36</name>
</gene>
<feature type="chain" id="PRO_0000119929" description="F-box only protein 36">
    <location>
        <begin position="1"/>
        <end position="188"/>
    </location>
</feature>
<feature type="domain" description="F-box" evidence="2">
    <location>
        <begin position="91"/>
        <end position="137"/>
    </location>
</feature>
<proteinExistence type="evidence at protein level"/>
<name>FBX36_MOUSE</name>
<reference key="1">
    <citation type="journal article" date="2005" name="Science">
        <title>The transcriptional landscape of the mammalian genome.</title>
        <authorList>
            <person name="Carninci P."/>
            <person name="Kasukawa T."/>
            <person name="Katayama S."/>
            <person name="Gough J."/>
            <person name="Frith M.C."/>
            <person name="Maeda N."/>
            <person name="Oyama R."/>
            <person name="Ravasi T."/>
            <person name="Lenhard B."/>
            <person name="Wells C."/>
            <person name="Kodzius R."/>
            <person name="Shimokawa K."/>
            <person name="Bajic V.B."/>
            <person name="Brenner S.E."/>
            <person name="Batalov S."/>
            <person name="Forrest A.R."/>
            <person name="Zavolan M."/>
            <person name="Davis M.J."/>
            <person name="Wilming L.G."/>
            <person name="Aidinis V."/>
            <person name="Allen J.E."/>
            <person name="Ambesi-Impiombato A."/>
            <person name="Apweiler R."/>
            <person name="Aturaliya R.N."/>
            <person name="Bailey T.L."/>
            <person name="Bansal M."/>
            <person name="Baxter L."/>
            <person name="Beisel K.W."/>
            <person name="Bersano T."/>
            <person name="Bono H."/>
            <person name="Chalk A.M."/>
            <person name="Chiu K.P."/>
            <person name="Choudhary V."/>
            <person name="Christoffels A."/>
            <person name="Clutterbuck D.R."/>
            <person name="Crowe M.L."/>
            <person name="Dalla E."/>
            <person name="Dalrymple B.P."/>
            <person name="de Bono B."/>
            <person name="Della Gatta G."/>
            <person name="di Bernardo D."/>
            <person name="Down T."/>
            <person name="Engstrom P."/>
            <person name="Fagiolini M."/>
            <person name="Faulkner G."/>
            <person name="Fletcher C.F."/>
            <person name="Fukushima T."/>
            <person name="Furuno M."/>
            <person name="Futaki S."/>
            <person name="Gariboldi M."/>
            <person name="Georgii-Hemming P."/>
            <person name="Gingeras T.R."/>
            <person name="Gojobori T."/>
            <person name="Green R.E."/>
            <person name="Gustincich S."/>
            <person name="Harbers M."/>
            <person name="Hayashi Y."/>
            <person name="Hensch T.K."/>
            <person name="Hirokawa N."/>
            <person name="Hill D."/>
            <person name="Huminiecki L."/>
            <person name="Iacono M."/>
            <person name="Ikeo K."/>
            <person name="Iwama A."/>
            <person name="Ishikawa T."/>
            <person name="Jakt M."/>
            <person name="Kanapin A."/>
            <person name="Katoh M."/>
            <person name="Kawasawa Y."/>
            <person name="Kelso J."/>
            <person name="Kitamura H."/>
            <person name="Kitano H."/>
            <person name="Kollias G."/>
            <person name="Krishnan S.P."/>
            <person name="Kruger A."/>
            <person name="Kummerfeld S.K."/>
            <person name="Kurochkin I.V."/>
            <person name="Lareau L.F."/>
            <person name="Lazarevic D."/>
            <person name="Lipovich L."/>
            <person name="Liu J."/>
            <person name="Liuni S."/>
            <person name="McWilliam S."/>
            <person name="Madan Babu M."/>
            <person name="Madera M."/>
            <person name="Marchionni L."/>
            <person name="Matsuda H."/>
            <person name="Matsuzawa S."/>
            <person name="Miki H."/>
            <person name="Mignone F."/>
            <person name="Miyake S."/>
            <person name="Morris K."/>
            <person name="Mottagui-Tabar S."/>
            <person name="Mulder N."/>
            <person name="Nakano N."/>
            <person name="Nakauchi H."/>
            <person name="Ng P."/>
            <person name="Nilsson R."/>
            <person name="Nishiguchi S."/>
            <person name="Nishikawa S."/>
            <person name="Nori F."/>
            <person name="Ohara O."/>
            <person name="Okazaki Y."/>
            <person name="Orlando V."/>
            <person name="Pang K.C."/>
            <person name="Pavan W.J."/>
            <person name="Pavesi G."/>
            <person name="Pesole G."/>
            <person name="Petrovsky N."/>
            <person name="Piazza S."/>
            <person name="Reed J."/>
            <person name="Reid J.F."/>
            <person name="Ring B.Z."/>
            <person name="Ringwald M."/>
            <person name="Rost B."/>
            <person name="Ruan Y."/>
            <person name="Salzberg S.L."/>
            <person name="Sandelin A."/>
            <person name="Schneider C."/>
            <person name="Schoenbach C."/>
            <person name="Sekiguchi K."/>
            <person name="Semple C.A."/>
            <person name="Seno S."/>
            <person name="Sessa L."/>
            <person name="Sheng Y."/>
            <person name="Shibata Y."/>
            <person name="Shimada H."/>
            <person name="Shimada K."/>
            <person name="Silva D."/>
            <person name="Sinclair B."/>
            <person name="Sperling S."/>
            <person name="Stupka E."/>
            <person name="Sugiura K."/>
            <person name="Sultana R."/>
            <person name="Takenaka Y."/>
            <person name="Taki K."/>
            <person name="Tammoja K."/>
            <person name="Tan S.L."/>
            <person name="Tang S."/>
            <person name="Taylor M.S."/>
            <person name="Tegner J."/>
            <person name="Teichmann S.A."/>
            <person name="Ueda H.R."/>
            <person name="van Nimwegen E."/>
            <person name="Verardo R."/>
            <person name="Wei C.L."/>
            <person name="Yagi K."/>
            <person name="Yamanishi H."/>
            <person name="Zabarovsky E."/>
            <person name="Zhu S."/>
            <person name="Zimmer A."/>
            <person name="Hide W."/>
            <person name="Bult C."/>
            <person name="Grimmond S.M."/>
            <person name="Teasdale R.D."/>
            <person name="Liu E.T."/>
            <person name="Brusic V."/>
            <person name="Quackenbush J."/>
            <person name="Wahlestedt C."/>
            <person name="Mattick J.S."/>
            <person name="Hume D.A."/>
            <person name="Kai C."/>
            <person name="Sasaki D."/>
            <person name="Tomaru Y."/>
            <person name="Fukuda S."/>
            <person name="Kanamori-Katayama M."/>
            <person name="Suzuki M."/>
            <person name="Aoki J."/>
            <person name="Arakawa T."/>
            <person name="Iida J."/>
            <person name="Imamura K."/>
            <person name="Itoh M."/>
            <person name="Kato T."/>
            <person name="Kawaji H."/>
            <person name="Kawagashira N."/>
            <person name="Kawashima T."/>
            <person name="Kojima M."/>
            <person name="Kondo S."/>
            <person name="Konno H."/>
            <person name="Nakano K."/>
            <person name="Ninomiya N."/>
            <person name="Nishio T."/>
            <person name="Okada M."/>
            <person name="Plessy C."/>
            <person name="Shibata K."/>
            <person name="Shiraki T."/>
            <person name="Suzuki S."/>
            <person name="Tagami M."/>
            <person name="Waki K."/>
            <person name="Watahiki A."/>
            <person name="Okamura-Oho Y."/>
            <person name="Suzuki H."/>
            <person name="Kawai J."/>
            <person name="Hayashizaki Y."/>
        </authorList>
    </citation>
    <scope>NUCLEOTIDE SEQUENCE [LARGE SCALE MRNA]</scope>
    <source>
        <strain>C57BL/6J</strain>
        <tissue>Embryo</tissue>
        <tissue>Small intestine</tissue>
    </source>
</reference>
<reference key="2">
    <citation type="journal article" date="2004" name="Genome Res.">
        <title>The status, quality, and expansion of the NIH full-length cDNA project: the Mammalian Gene Collection (MGC).</title>
        <authorList>
            <consortium name="The MGC Project Team"/>
        </authorList>
    </citation>
    <scope>NUCLEOTIDE SEQUENCE [LARGE SCALE MRNA]</scope>
    <source>
        <tissue>Testis</tissue>
    </source>
</reference>
<reference key="3">
    <citation type="journal article" date="2010" name="Cell">
        <title>A tissue-specific atlas of mouse protein phosphorylation and expression.</title>
        <authorList>
            <person name="Huttlin E.L."/>
            <person name="Jedrychowski M.P."/>
            <person name="Elias J.E."/>
            <person name="Goswami T."/>
            <person name="Rad R."/>
            <person name="Beausoleil S.A."/>
            <person name="Villen J."/>
            <person name="Haas W."/>
            <person name="Sowa M.E."/>
            <person name="Gygi S.P."/>
        </authorList>
    </citation>
    <scope>IDENTIFICATION BY MASS SPECTROMETRY [LARGE SCALE ANALYSIS]</scope>
    <source>
        <tissue>Testis</tissue>
    </source>
</reference>
<organism>
    <name type="scientific">Mus musculus</name>
    <name type="common">Mouse</name>
    <dbReference type="NCBI Taxonomy" id="10090"/>
    <lineage>
        <taxon>Eukaryota</taxon>
        <taxon>Metazoa</taxon>
        <taxon>Chordata</taxon>
        <taxon>Craniata</taxon>
        <taxon>Vertebrata</taxon>
        <taxon>Euteleostomi</taxon>
        <taxon>Mammalia</taxon>
        <taxon>Eutheria</taxon>
        <taxon>Euarchontoglires</taxon>
        <taxon>Glires</taxon>
        <taxon>Rodentia</taxon>
        <taxon>Myomorpha</taxon>
        <taxon>Muroidea</taxon>
        <taxon>Muridae</taxon>
        <taxon>Murinae</taxon>
        <taxon>Mus</taxon>
        <taxon>Mus</taxon>
    </lineage>
</organism>
<dbReference type="EMBL" id="AK003856">
    <property type="protein sequence ID" value="BAB23040.1"/>
    <property type="molecule type" value="mRNA"/>
</dbReference>
<dbReference type="EMBL" id="AK008324">
    <property type="protein sequence ID" value="BAB25602.1"/>
    <property type="molecule type" value="mRNA"/>
</dbReference>
<dbReference type="EMBL" id="BC049581">
    <property type="protein sequence ID" value="AAH49581.1"/>
    <property type="molecule type" value="mRNA"/>
</dbReference>
<dbReference type="CCDS" id="CCDS35634.1"/>
<dbReference type="RefSeq" id="NP_079662.1">
    <property type="nucleotide sequence ID" value="NM_025386.3"/>
</dbReference>
<dbReference type="SMR" id="Q9CQ24"/>
<dbReference type="FunCoup" id="Q9CQ24">
    <property type="interactions" value="39"/>
</dbReference>
<dbReference type="STRING" id="10090.ENSMUSP00000095276"/>
<dbReference type="PhosphoSitePlus" id="Q9CQ24"/>
<dbReference type="SwissPalm" id="Q9CQ24"/>
<dbReference type="PaxDb" id="10090-ENSMUSP00000095276"/>
<dbReference type="ProteomicsDB" id="270966"/>
<dbReference type="Pumba" id="Q9CQ24"/>
<dbReference type="Antibodypedia" id="34398">
    <property type="antibodies" value="114 antibodies from 20 providers"/>
</dbReference>
<dbReference type="DNASU" id="66153"/>
<dbReference type="Ensembl" id="ENSMUST00000097672.4">
    <property type="protein sequence ID" value="ENSMUSP00000095276.4"/>
    <property type="gene ID" value="ENSMUSG00000073633.10"/>
</dbReference>
<dbReference type="GeneID" id="66153"/>
<dbReference type="KEGG" id="mmu:66153"/>
<dbReference type="UCSC" id="uc007btc.2">
    <property type="organism name" value="mouse"/>
</dbReference>
<dbReference type="AGR" id="MGI:1289192"/>
<dbReference type="CTD" id="130888"/>
<dbReference type="MGI" id="MGI:1289192">
    <property type="gene designation" value="Fbxo36"/>
</dbReference>
<dbReference type="VEuPathDB" id="HostDB:ENSMUSG00000073633"/>
<dbReference type="eggNOG" id="KOG1777">
    <property type="taxonomic scope" value="Eukaryota"/>
</dbReference>
<dbReference type="GeneTree" id="ENSGT00390000001015"/>
<dbReference type="HOGENOM" id="CLU_108656_0_0_1"/>
<dbReference type="InParanoid" id="Q9CQ24"/>
<dbReference type="OMA" id="CNSDELW"/>
<dbReference type="OrthoDB" id="3219396at2759"/>
<dbReference type="PhylomeDB" id="Q9CQ24"/>
<dbReference type="TreeFam" id="TF329337"/>
<dbReference type="BioGRID-ORCS" id="66153">
    <property type="hits" value="2 hits in 78 CRISPR screens"/>
</dbReference>
<dbReference type="ChiTaRS" id="Fbxo36">
    <property type="organism name" value="mouse"/>
</dbReference>
<dbReference type="PRO" id="PR:Q9CQ24"/>
<dbReference type="Proteomes" id="UP000000589">
    <property type="component" value="Chromosome 1"/>
</dbReference>
<dbReference type="RNAct" id="Q9CQ24">
    <property type="molecule type" value="protein"/>
</dbReference>
<dbReference type="Bgee" id="ENSMUSG00000073633">
    <property type="expression patterns" value="Expressed in gastrula and 182 other cell types or tissues"/>
</dbReference>
<dbReference type="CDD" id="cd22106">
    <property type="entry name" value="F-box_FBXO36"/>
    <property type="match status" value="1"/>
</dbReference>
<dbReference type="Gene3D" id="1.20.1280.50">
    <property type="match status" value="1"/>
</dbReference>
<dbReference type="InterPro" id="IPR036047">
    <property type="entry name" value="F-box-like_dom_sf"/>
</dbReference>
<dbReference type="InterPro" id="IPR001810">
    <property type="entry name" value="F-box_dom"/>
</dbReference>
<dbReference type="Pfam" id="PF12937">
    <property type="entry name" value="F-box-like"/>
    <property type="match status" value="1"/>
</dbReference>
<dbReference type="SUPFAM" id="SSF81383">
    <property type="entry name" value="F-box domain"/>
    <property type="match status" value="1"/>
</dbReference>
<dbReference type="PROSITE" id="PS50181">
    <property type="entry name" value="FBOX"/>
    <property type="match status" value="1"/>
</dbReference>
<comment type="function">
    <text evidence="1">Substrate-recognition component of the SCF (SKP1-CUL1-F-box protein)-type E3 ubiquitin ligase complex.</text>
</comment>
<comment type="subunit">
    <text evidence="1">Directly interacts with SKP1 and CUL1.</text>
</comment>
<protein>
    <recommendedName>
        <fullName>F-box only protein 36</fullName>
    </recommendedName>
</protein>
<sequence>MASWLPETLFEIVGQGPAPSKDYYQLLITRTQIIFRWWKISLRSEYRSAKPGETKESHEDFLDNSHLQVQVAVVFGTKILDYVFNLCEGKFDYLERLSDRLLLKIICYLDLEDIASLSQTSSKFEKLCKSDLLWEQIVQSTCDTITPDMRALAKNMGWRQMFLTNNIQLQRQTRKKKQRQENQAEKLA</sequence>
<evidence type="ECO:0000250" key="1"/>
<evidence type="ECO:0000255" key="2">
    <source>
        <dbReference type="PROSITE-ProRule" id="PRU00080"/>
    </source>
</evidence>
<keyword id="KW-1185">Reference proteome</keyword>
<keyword id="KW-0833">Ubl conjugation pathway</keyword>
<accession>Q9CQ24</accession>